<reference key="1">
    <citation type="journal article" date="2010" name="ISME J.">
        <title>The complete genome sequence of the algal symbiont Dinoroseobacter shibae: a hitchhiker's guide to life in the sea.</title>
        <authorList>
            <person name="Wagner-Dobler I."/>
            <person name="Ballhausen B."/>
            <person name="Berger M."/>
            <person name="Brinkhoff T."/>
            <person name="Buchholz I."/>
            <person name="Bunk B."/>
            <person name="Cypionka H."/>
            <person name="Daniel R."/>
            <person name="Drepper T."/>
            <person name="Gerdts G."/>
            <person name="Hahnke S."/>
            <person name="Han C."/>
            <person name="Jahn D."/>
            <person name="Kalhoefer D."/>
            <person name="Kiss H."/>
            <person name="Klenk H.P."/>
            <person name="Kyrpides N."/>
            <person name="Liebl W."/>
            <person name="Liesegang H."/>
            <person name="Meincke L."/>
            <person name="Pati A."/>
            <person name="Petersen J."/>
            <person name="Piekarski T."/>
            <person name="Pommerenke C."/>
            <person name="Pradella S."/>
            <person name="Pukall R."/>
            <person name="Rabus R."/>
            <person name="Stackebrandt E."/>
            <person name="Thole S."/>
            <person name="Thompson L."/>
            <person name="Tielen P."/>
            <person name="Tomasch J."/>
            <person name="von Jan M."/>
            <person name="Wanphrut N."/>
            <person name="Wichels A."/>
            <person name="Zech H."/>
            <person name="Simon M."/>
        </authorList>
    </citation>
    <scope>NUCLEOTIDE SEQUENCE [LARGE SCALE GENOMIC DNA]</scope>
    <source>
        <strain>DSM 16493 / NCIMB 14021 / DFL 12</strain>
    </source>
</reference>
<protein>
    <recommendedName>
        <fullName evidence="1">UDP-N-acetylglucosamine 1-carboxyvinyltransferase</fullName>
        <ecNumber evidence="1">2.5.1.7</ecNumber>
    </recommendedName>
    <alternativeName>
        <fullName evidence="1">Enoylpyruvate transferase</fullName>
    </alternativeName>
    <alternativeName>
        <fullName evidence="1">UDP-N-acetylglucosamine enolpyruvyl transferase</fullName>
        <shortName evidence="1">EPT</shortName>
    </alternativeName>
</protein>
<evidence type="ECO:0000255" key="1">
    <source>
        <dbReference type="HAMAP-Rule" id="MF_00111"/>
    </source>
</evidence>
<name>MURA_DINSH</name>
<dbReference type="EC" id="2.5.1.7" evidence="1"/>
<dbReference type="EMBL" id="CP000830">
    <property type="protein sequence ID" value="ABV92719.1"/>
    <property type="molecule type" value="Genomic_DNA"/>
</dbReference>
<dbReference type="RefSeq" id="WP_012177651.1">
    <property type="nucleotide sequence ID" value="NC_009952.1"/>
</dbReference>
<dbReference type="SMR" id="A8LS12"/>
<dbReference type="STRING" id="398580.Dshi_0977"/>
<dbReference type="KEGG" id="dsh:Dshi_0977"/>
<dbReference type="eggNOG" id="COG0766">
    <property type="taxonomic scope" value="Bacteria"/>
</dbReference>
<dbReference type="HOGENOM" id="CLU_027387_0_0_5"/>
<dbReference type="OrthoDB" id="9803760at2"/>
<dbReference type="UniPathway" id="UPA00219"/>
<dbReference type="Proteomes" id="UP000006833">
    <property type="component" value="Chromosome"/>
</dbReference>
<dbReference type="GO" id="GO:0005737">
    <property type="term" value="C:cytoplasm"/>
    <property type="evidence" value="ECO:0007669"/>
    <property type="project" value="UniProtKB-SubCell"/>
</dbReference>
<dbReference type="GO" id="GO:0008760">
    <property type="term" value="F:UDP-N-acetylglucosamine 1-carboxyvinyltransferase activity"/>
    <property type="evidence" value="ECO:0007669"/>
    <property type="project" value="UniProtKB-UniRule"/>
</dbReference>
<dbReference type="GO" id="GO:0051301">
    <property type="term" value="P:cell division"/>
    <property type="evidence" value="ECO:0007669"/>
    <property type="project" value="UniProtKB-KW"/>
</dbReference>
<dbReference type="GO" id="GO:0071555">
    <property type="term" value="P:cell wall organization"/>
    <property type="evidence" value="ECO:0007669"/>
    <property type="project" value="UniProtKB-KW"/>
</dbReference>
<dbReference type="GO" id="GO:0009252">
    <property type="term" value="P:peptidoglycan biosynthetic process"/>
    <property type="evidence" value="ECO:0007669"/>
    <property type="project" value="UniProtKB-UniRule"/>
</dbReference>
<dbReference type="GO" id="GO:0008360">
    <property type="term" value="P:regulation of cell shape"/>
    <property type="evidence" value="ECO:0007669"/>
    <property type="project" value="UniProtKB-KW"/>
</dbReference>
<dbReference type="GO" id="GO:0019277">
    <property type="term" value="P:UDP-N-acetylgalactosamine biosynthetic process"/>
    <property type="evidence" value="ECO:0007669"/>
    <property type="project" value="InterPro"/>
</dbReference>
<dbReference type="CDD" id="cd01555">
    <property type="entry name" value="UdpNAET"/>
    <property type="match status" value="1"/>
</dbReference>
<dbReference type="FunFam" id="3.65.10.10:FF:000001">
    <property type="entry name" value="UDP-N-acetylglucosamine 1-carboxyvinyltransferase"/>
    <property type="match status" value="1"/>
</dbReference>
<dbReference type="Gene3D" id="3.65.10.10">
    <property type="entry name" value="Enolpyruvate transferase domain"/>
    <property type="match status" value="2"/>
</dbReference>
<dbReference type="HAMAP" id="MF_00111">
    <property type="entry name" value="MurA"/>
    <property type="match status" value="1"/>
</dbReference>
<dbReference type="InterPro" id="IPR001986">
    <property type="entry name" value="Enolpyruvate_Tfrase_dom"/>
</dbReference>
<dbReference type="InterPro" id="IPR036968">
    <property type="entry name" value="Enolpyruvate_Tfrase_sf"/>
</dbReference>
<dbReference type="InterPro" id="IPR050068">
    <property type="entry name" value="MurA_subfamily"/>
</dbReference>
<dbReference type="InterPro" id="IPR013792">
    <property type="entry name" value="RNA3'P_cycl/enolpyr_Trfase_a/b"/>
</dbReference>
<dbReference type="InterPro" id="IPR005750">
    <property type="entry name" value="UDP_GlcNAc_COvinyl_MurA"/>
</dbReference>
<dbReference type="NCBIfam" id="TIGR01072">
    <property type="entry name" value="murA"/>
    <property type="match status" value="1"/>
</dbReference>
<dbReference type="NCBIfam" id="NF006873">
    <property type="entry name" value="PRK09369.1"/>
    <property type="match status" value="1"/>
</dbReference>
<dbReference type="PANTHER" id="PTHR43783">
    <property type="entry name" value="UDP-N-ACETYLGLUCOSAMINE 1-CARBOXYVINYLTRANSFERASE"/>
    <property type="match status" value="1"/>
</dbReference>
<dbReference type="PANTHER" id="PTHR43783:SF1">
    <property type="entry name" value="UDP-N-ACETYLGLUCOSAMINE 1-CARBOXYVINYLTRANSFERASE"/>
    <property type="match status" value="1"/>
</dbReference>
<dbReference type="Pfam" id="PF00275">
    <property type="entry name" value="EPSP_synthase"/>
    <property type="match status" value="1"/>
</dbReference>
<dbReference type="SUPFAM" id="SSF55205">
    <property type="entry name" value="EPT/RTPC-like"/>
    <property type="match status" value="1"/>
</dbReference>
<comment type="function">
    <text evidence="1">Cell wall formation. Adds enolpyruvyl to UDP-N-acetylglucosamine.</text>
</comment>
<comment type="catalytic activity">
    <reaction evidence="1">
        <text>phosphoenolpyruvate + UDP-N-acetyl-alpha-D-glucosamine = UDP-N-acetyl-3-O-(1-carboxyvinyl)-alpha-D-glucosamine + phosphate</text>
        <dbReference type="Rhea" id="RHEA:18681"/>
        <dbReference type="ChEBI" id="CHEBI:43474"/>
        <dbReference type="ChEBI" id="CHEBI:57705"/>
        <dbReference type="ChEBI" id="CHEBI:58702"/>
        <dbReference type="ChEBI" id="CHEBI:68483"/>
        <dbReference type="EC" id="2.5.1.7"/>
    </reaction>
</comment>
<comment type="pathway">
    <text evidence="1">Cell wall biogenesis; peptidoglycan biosynthesis.</text>
</comment>
<comment type="subcellular location">
    <subcellularLocation>
        <location evidence="1">Cytoplasm</location>
    </subcellularLocation>
</comment>
<comment type="similarity">
    <text evidence="1">Belongs to the EPSP synthase family. MurA subfamily.</text>
</comment>
<proteinExistence type="inferred from homology"/>
<organism>
    <name type="scientific">Dinoroseobacter shibae (strain DSM 16493 / NCIMB 14021 / DFL 12)</name>
    <dbReference type="NCBI Taxonomy" id="398580"/>
    <lineage>
        <taxon>Bacteria</taxon>
        <taxon>Pseudomonadati</taxon>
        <taxon>Pseudomonadota</taxon>
        <taxon>Alphaproteobacteria</taxon>
        <taxon>Rhodobacterales</taxon>
        <taxon>Roseobacteraceae</taxon>
        <taxon>Dinoroseobacter</taxon>
    </lineage>
</organism>
<keyword id="KW-0131">Cell cycle</keyword>
<keyword id="KW-0132">Cell division</keyword>
<keyword id="KW-0133">Cell shape</keyword>
<keyword id="KW-0961">Cell wall biogenesis/degradation</keyword>
<keyword id="KW-0963">Cytoplasm</keyword>
<keyword id="KW-0573">Peptidoglycan synthesis</keyword>
<keyword id="KW-0670">Pyruvate</keyword>
<keyword id="KW-1185">Reference proteome</keyword>
<keyword id="KW-0808">Transferase</keyword>
<feature type="chain" id="PRO_1000075969" description="UDP-N-acetylglucosamine 1-carboxyvinyltransferase">
    <location>
        <begin position="1"/>
        <end position="422"/>
    </location>
</feature>
<feature type="active site" description="Proton donor" evidence="1">
    <location>
        <position position="118"/>
    </location>
</feature>
<feature type="binding site" evidence="1">
    <location>
        <begin position="22"/>
        <end position="23"/>
    </location>
    <ligand>
        <name>phosphoenolpyruvate</name>
        <dbReference type="ChEBI" id="CHEBI:58702"/>
    </ligand>
</feature>
<feature type="binding site" evidence="1">
    <location>
        <position position="94"/>
    </location>
    <ligand>
        <name>UDP-N-acetyl-alpha-D-glucosamine</name>
        <dbReference type="ChEBI" id="CHEBI:57705"/>
    </ligand>
</feature>
<feature type="binding site" evidence="1">
    <location>
        <begin position="123"/>
        <end position="127"/>
    </location>
    <ligand>
        <name>UDP-N-acetyl-alpha-D-glucosamine</name>
        <dbReference type="ChEBI" id="CHEBI:57705"/>
    </ligand>
</feature>
<feature type="binding site" evidence="1">
    <location>
        <position position="308"/>
    </location>
    <ligand>
        <name>UDP-N-acetyl-alpha-D-glucosamine</name>
        <dbReference type="ChEBI" id="CHEBI:57705"/>
    </ligand>
</feature>
<feature type="binding site" evidence="1">
    <location>
        <position position="330"/>
    </location>
    <ligand>
        <name>UDP-N-acetyl-alpha-D-glucosamine</name>
        <dbReference type="ChEBI" id="CHEBI:57705"/>
    </ligand>
</feature>
<feature type="modified residue" description="2-(S-cysteinyl)pyruvic acid O-phosphothioketal" evidence="1">
    <location>
        <position position="118"/>
    </location>
</feature>
<accession>A8LS12</accession>
<sequence length="422" mass="44294">MDQIVIRGGVPLHGAIPIAGAKNACLTLMPATLLSDEPLTLTNAPRLSDIATMTALLRSLGAEVSTLQDGKVLALSSHRIDNHTAEYDIVRKMRASILVLGPMLARDGHAVVSLPGGCAIGARPVDLHLKGLEALGADLTLTDGYVHAKAPGGLKGAVFEFPFVSVGATENILMAATLAKGTTVLKNAAREPEIVDLARCLRKMGAQIEGEGTSRITVQGVDRLHGATHPVVTDRIELGTYMLAPAITGGEVELIGGRLDLVAAFAERLAAAGVDVSETAHGLTVKRANGRVGAVDVVTEPFPGFPTDLQAQMMALLCTADGVSVLEERIFENRFMHAPELIRMGARIDVHGGTATVTGVPQLKGAPVMATDLRASVSLILAALAAEGETVVSRVYHLDRGYERVEEKLSACGAQIERVKET</sequence>
<gene>
    <name evidence="1" type="primary">murA</name>
    <name type="ordered locus">Dshi_0977</name>
</gene>